<organism>
    <name type="scientific">Sendai virus (strain 6/94)</name>
    <name type="common">SeV</name>
    <dbReference type="NCBI Taxonomy" id="11193"/>
    <lineage>
        <taxon>Viruses</taxon>
        <taxon>Riboviria</taxon>
        <taxon>Orthornavirae</taxon>
        <taxon>Negarnaviricota</taxon>
        <taxon>Haploviricotina</taxon>
        <taxon>Monjiviricetes</taxon>
        <taxon>Mononegavirales</taxon>
        <taxon>Paramyxoviridae</taxon>
        <taxon>Feraresvirinae</taxon>
        <taxon>Respirovirus</taxon>
        <taxon>Respirovirus muris</taxon>
    </lineage>
</organism>
<organismHost>
    <name type="scientific">Cavia cutleri</name>
    <name type="common">Guinea pig</name>
    <dbReference type="NCBI Taxonomy" id="10144"/>
</organismHost>
<organismHost>
    <name type="scientific">Cricetidae sp.</name>
    <name type="common">Hamster</name>
    <dbReference type="NCBI Taxonomy" id="36483"/>
</organismHost>
<organismHost>
    <name type="scientific">Mus musculus</name>
    <name type="common">Mouse</name>
    <dbReference type="NCBI Taxonomy" id="10090"/>
</organismHost>
<organismHost>
    <name type="scientific">Rattus norvegicus</name>
    <name type="common">Rat</name>
    <dbReference type="NCBI Taxonomy" id="10116"/>
</organismHost>
<evidence type="ECO:0000250" key="1"/>
<evidence type="ECO:0000250" key="2">
    <source>
        <dbReference type="UniProtKB" id="P04859"/>
    </source>
</evidence>
<evidence type="ECO:0000250" key="3">
    <source>
        <dbReference type="UniProtKB" id="P06162"/>
    </source>
</evidence>
<evidence type="ECO:0000250" key="4">
    <source>
        <dbReference type="UniProtKB" id="Q77M42"/>
    </source>
</evidence>
<evidence type="ECO:0000256" key="5">
    <source>
        <dbReference type="SAM" id="MobiDB-lite"/>
    </source>
</evidence>
<evidence type="ECO:0000305" key="6"/>
<feature type="chain" id="PRO_0000142711" description="Phosphoprotein">
    <location>
        <begin position="1"/>
        <end position="568"/>
    </location>
</feature>
<feature type="region of interest" description="Disordered" evidence="5">
    <location>
        <begin position="1"/>
        <end position="22"/>
    </location>
</feature>
<feature type="region of interest" description="N0 binding" evidence="2">
    <location>
        <begin position="33"/>
        <end position="41"/>
    </location>
</feature>
<feature type="region of interest" description="Disordered" evidence="5">
    <location>
        <begin position="40"/>
        <end position="320"/>
    </location>
</feature>
<feature type="region of interest" description="Multimerization" evidence="3">
    <location>
        <begin position="344"/>
        <end position="411"/>
    </location>
</feature>
<feature type="region of interest" description="L protein binding" evidence="2">
    <location>
        <begin position="412"/>
        <end position="445"/>
    </location>
</feature>
<feature type="region of interest" description="Interaction with the nucleocapsid (N-RNA)" evidence="2">
    <location>
        <begin position="479"/>
        <end position="568"/>
    </location>
</feature>
<feature type="coiled-coil region" evidence="1">
    <location>
        <begin position="364"/>
        <end position="429"/>
    </location>
</feature>
<feature type="compositionally biased region" description="Basic and acidic residues" evidence="5">
    <location>
        <begin position="7"/>
        <end position="20"/>
    </location>
</feature>
<feature type="compositionally biased region" description="Polar residues" evidence="5">
    <location>
        <begin position="50"/>
        <end position="60"/>
    </location>
</feature>
<feature type="compositionally biased region" description="Basic and acidic residues" evidence="5">
    <location>
        <begin position="83"/>
        <end position="101"/>
    </location>
</feature>
<feature type="compositionally biased region" description="Basic and acidic residues" evidence="5">
    <location>
        <begin position="150"/>
        <end position="168"/>
    </location>
</feature>
<feature type="compositionally biased region" description="Polar residues" evidence="5">
    <location>
        <begin position="191"/>
        <end position="206"/>
    </location>
</feature>
<feature type="modified residue" description="Phosphoserine; by host" evidence="1">
    <location>
        <position position="68"/>
    </location>
</feature>
<feature type="modified residue" description="Phosphoserine; by host" evidence="1">
    <location>
        <position position="125"/>
    </location>
</feature>
<feature type="modified residue" description="Phosphoserine; by host" evidence="1">
    <location>
        <position position="192"/>
    </location>
</feature>
<feature type="modified residue" description="Phosphoserine; by host" evidence="1">
    <location>
        <position position="249"/>
    </location>
</feature>
<feature type="modified residue" description="Phosphoserine; by host" evidence="1">
    <location>
        <position position="257"/>
    </location>
</feature>
<feature type="modified residue" description="Phosphoserine; by host" evidence="1">
    <location>
        <position position="447"/>
    </location>
</feature>
<feature type="modified residue" description="Phosphoserine; by host" evidence="1">
    <location>
        <position position="449"/>
    </location>
</feature>
<accession>P14251</accession>
<accession>P14255</accession>
<dbReference type="EMBL" id="X17007">
    <property type="protein sequence ID" value="CAA34867.1"/>
    <property type="molecule type" value="Genomic_RNA"/>
</dbReference>
<dbReference type="PIR" id="S06923">
    <property type="entry name" value="RRNZS6"/>
</dbReference>
<dbReference type="BMRB" id="P14251"/>
<dbReference type="SMR" id="P14251"/>
<dbReference type="GO" id="GO:0030430">
    <property type="term" value="C:host cell cytoplasm"/>
    <property type="evidence" value="ECO:0007669"/>
    <property type="project" value="UniProtKB-SubCell"/>
</dbReference>
<dbReference type="GO" id="GO:0003723">
    <property type="term" value="F:RNA binding"/>
    <property type="evidence" value="ECO:0007669"/>
    <property type="project" value="InterPro"/>
</dbReference>
<dbReference type="GO" id="GO:0003968">
    <property type="term" value="F:RNA-directed RNA polymerase activity"/>
    <property type="evidence" value="ECO:0007669"/>
    <property type="project" value="InterPro"/>
</dbReference>
<dbReference type="GO" id="GO:0006351">
    <property type="term" value="P:DNA-templated transcription"/>
    <property type="evidence" value="ECO:0007669"/>
    <property type="project" value="InterPro"/>
</dbReference>
<dbReference type="GO" id="GO:0019079">
    <property type="term" value="P:viral genome replication"/>
    <property type="evidence" value="ECO:0007669"/>
    <property type="project" value="InterPro"/>
</dbReference>
<dbReference type="CDD" id="cd21031">
    <property type="entry name" value="MEV_P-protein-C_like"/>
    <property type="match status" value="1"/>
</dbReference>
<dbReference type="Gene3D" id="1.10.287.340">
    <property type="match status" value="1"/>
</dbReference>
<dbReference type="Gene3D" id="1.10.8.10">
    <property type="entry name" value="DNA helicase RuvA subunit, C-terminal domain"/>
    <property type="match status" value="1"/>
</dbReference>
<dbReference type="Gene3D" id="1.10.287.320">
    <property type="entry name" value="Viral phosphoprotein oligmorisation site domain"/>
    <property type="match status" value="1"/>
</dbReference>
<dbReference type="InterPro" id="IPR002693">
    <property type="entry name" value="Paramyxo_PProtein_C"/>
</dbReference>
<dbReference type="InterPro" id="IPR043097">
    <property type="entry name" value="PProtein_oligomer_dom1"/>
</dbReference>
<dbReference type="InterPro" id="IPR016075">
    <property type="entry name" value="RNA_pol_Pprot-P_XD_paramyxovir"/>
</dbReference>
<dbReference type="Pfam" id="PF01806">
    <property type="entry name" value="Paramyxo_P"/>
    <property type="match status" value="1"/>
</dbReference>
<dbReference type="SUPFAM" id="SSF58034">
    <property type="entry name" value="Multimerization domain of the phosphoprotein from sendai virus"/>
    <property type="match status" value="1"/>
</dbReference>
<dbReference type="SUPFAM" id="SSF101089">
    <property type="entry name" value="Phosphoprotein XD domain"/>
    <property type="match status" value="1"/>
</dbReference>
<gene>
    <name type="primary">P/V/C</name>
</gene>
<proteinExistence type="inferred from homology"/>
<sequence length="568" mass="62178">MDQDAFILKEDSEVERKAPGGRESLSDVIGFLDAVLSSEPTDIGGDRSWLHNTINTSQGPGSAHRAKSEGEGEVSTPSTQDNRSGEESRVSGRTSKPEAEAHAGNLDKQNIHWAFRGRTGTNSVSQDLGDGGDSGILENPPNERGYPRSGIEDENREMAAHPDKRGEDQAEGLPEEVRGGTSLPDEGEGGASNNGRSMEPGSSHSARVTGVLVIPSPELEEAVLRRNKRRPTNSGSKPLTPATVPGTRSPPLNRYNSTGPPPGKPPSTQDEHINSGDTPAVRVKDRKPPIGTRSVSDCPANGRPIHPGIETDSTKKGIGENTSSMKEMATLLTGLGVIQSAQEFESSRDASYVFARRALKSANYAEMTFNVCGLILSAEKSSARKVDENKQLLKQIQENVESFRDIYKRFSEYQKEQNSLLMSNLSTLHIITDRGGKTDNTDSLTRSPSVFAKSKENKTKATRFDPSMETLEDMKYKPDLIREDEFRDEIRNPVYQERDTEPRASNASRLFPSKEKPTMHSLRLVIESSPLSRAEKAAYVKSLSKCKTDQEVKAVMELVEEDIESLTN</sequence>
<comment type="function">
    <text evidence="3 4">Essential cofactor of the RNA polymerase L that plays a central role in the transcription and replication by forming the polymerase complex with RNA polymerase L and recruiting L to the genomic N-RNA template for RNA synthesis. Also plays a central role in the encapsidation of nascent RNA chains by forming the encapsidation complex with the nucleocapsid protein N (N-P complex). Acts as a chaperone for newly synthesized free N protein, so-called N0, allowing encapsidation of nascent RNA chains during replication (By similarity). The nucleoprotein protein N prevents excessive phosphorylation of P, which leads to down-regulation of viral transcription/ replication. Participates, together with N, in the formation of viral factories (viroplasms), which are large inclusions in the host cytoplasm where replication takes place (By similarity). Recruits host PI4KB and remodel the host endoplasmic reticulum membrane to form viral replication factories (By similarity).</text>
</comment>
<comment type="subunit">
    <text evidence="2">Homotetramer. Interacts (via multimerization domain) with polymerase L; this interaction forms the polymerase complex. Interacts (via N-terminus) with N0; this interaction allows P to chaperon N0 before encapsidation and form the N-P complex. Interacts (via C-terminus) with N-RNA template; this interaction positions the polymerase on the template.</text>
</comment>
<comment type="subcellular location">
    <subcellularLocation>
        <location>Host cytoplasm</location>
    </subcellularLocation>
</comment>
<comment type="domain">
    <text evidence="2 3">The N-terminus consists of a long intrinsically disordered tail (By similarity). The central part contains the coiled-coil multimerization domain (PMD). Forms a four-stranded coiled coil structure. The C-terminus constitutes the alpha-helical domain that binds to the nucleocapsid (N-RNA complex) (By similarity).</text>
</comment>
<comment type="PTM">
    <text evidence="2">Phosphorylated by PKC/PRKCZ, and other unknown kinases. Phosphorylation is necessary for viral transcription and replication. The N-terminus contains the majority of phosphorylated sites. Ser-249 is the major site of phosphorylation, but is not necessary for most functions.</text>
</comment>
<comment type="RNA editing">
    <location>
        <position position="318" evidence="1"/>
    </location>
    <text evidence="1">Partially edited. RNA editing at this position consists of an insertion of one or two guanine nucleotides. The sequence displayed here is the P protein, derived from the unedited RNA (By similarity).</text>
</comment>
<comment type="miscellaneous">
    <text>The P/V/C gene has two overlapping open reading frames. One encodes the P/V/W proteins and the other the C/Y proteins.</text>
</comment>
<comment type="similarity">
    <text evidence="6">Belongs to the respirovirus P protein family.</text>
</comment>
<protein>
    <recommendedName>
        <fullName>Phosphoprotein</fullName>
        <shortName>Protein P</shortName>
    </recommendedName>
</protein>
<name>PHOSP_SEND6</name>
<keyword id="KW-0143">Chaperone</keyword>
<keyword id="KW-0175">Coiled coil</keyword>
<keyword id="KW-1035">Host cytoplasm</keyword>
<keyword id="KW-0597">Phosphoprotein</keyword>
<keyword id="KW-0691">RNA editing</keyword>
<keyword id="KW-0693">Viral RNA replication</keyword>
<reference key="1">
    <citation type="journal article" date="1989" name="Nucleic Acids Res.">
        <title>Cloning and sequencing of the polymerase gene (P) of Sendai virus (strain 6/94).</title>
        <authorList>
            <person name="Homann H.E."/>
            <person name="Neubert W.J."/>
        </authorList>
    </citation>
    <scope>NUCLEOTIDE SEQUENCE [GENOMIC RNA]</scope>
</reference>